<gene>
    <name type="primary">cnrY</name>
    <name type="synonym">ORF0b</name>
    <name type="ordered locus">Rmet_6205</name>
    <name type="ORF">RMe0088</name>
</gene>
<evidence type="ECO:0000255" key="1"/>
<evidence type="ECO:0000269" key="2">
    <source>
    </source>
</evidence>
<evidence type="ECO:0000269" key="3">
    <source>
    </source>
</evidence>
<evidence type="ECO:0000305" key="4"/>
<evidence type="ECO:0007829" key="5">
    <source>
        <dbReference type="PDB" id="4CXF"/>
    </source>
</evidence>
<dbReference type="EMBL" id="M91650">
    <property type="status" value="NOT_ANNOTATED_CDS"/>
    <property type="molecule type" value="Genomic_DNA"/>
</dbReference>
<dbReference type="EMBL" id="AJ276513">
    <property type="protein sequence ID" value="CAB82448.1"/>
    <property type="molecule type" value="Genomic_DNA"/>
</dbReference>
<dbReference type="EMBL" id="X90708">
    <property type="protein sequence ID" value="CAI30232.1"/>
    <property type="molecule type" value="Genomic_DNA"/>
</dbReference>
<dbReference type="EMBL" id="CP000355">
    <property type="protein sequence ID" value="ABF13064.1"/>
    <property type="molecule type" value="Genomic_DNA"/>
</dbReference>
<dbReference type="PIR" id="B47056">
    <property type="entry name" value="B47056"/>
</dbReference>
<dbReference type="RefSeq" id="WP_011239971.1">
    <property type="nucleotide sequence ID" value="NC_007972.2"/>
</dbReference>
<dbReference type="RefSeq" id="YP_161710.1">
    <property type="nucleotide sequence ID" value="NC_006525.1"/>
</dbReference>
<dbReference type="PDB" id="4CXF">
    <property type="method" value="X-ray"/>
    <property type="resolution" value="1.75 A"/>
    <property type="chains" value="B=1-95"/>
</dbReference>
<dbReference type="PDBsum" id="4CXF"/>
<dbReference type="SMR" id="P56621"/>
<dbReference type="GeneID" id="60825777"/>
<dbReference type="KEGG" id="rme:Rmet_6205"/>
<dbReference type="HOGENOM" id="CLU_2370740_0_0_4"/>
<dbReference type="Proteomes" id="UP000002429">
    <property type="component" value="Plasmid pMOL28"/>
</dbReference>
<dbReference type="GO" id="GO:0005886">
    <property type="term" value="C:plasma membrane"/>
    <property type="evidence" value="ECO:0007669"/>
    <property type="project" value="UniProtKB-SubCell"/>
</dbReference>
<dbReference type="GO" id="GO:0140678">
    <property type="term" value="F:molecular function inhibitor activity"/>
    <property type="evidence" value="ECO:0000269"/>
    <property type="project" value="DisProt"/>
</dbReference>
<dbReference type="DisProt" id="DP01181"/>
<dbReference type="InterPro" id="IPR035230">
    <property type="entry name" value="CnrY"/>
</dbReference>
<dbReference type="NCBIfam" id="NF033790">
    <property type="entry name" value="CnrY_NccY_antiS"/>
    <property type="match status" value="1"/>
</dbReference>
<dbReference type="Pfam" id="PF17524">
    <property type="entry name" value="CnrY"/>
    <property type="match status" value="1"/>
</dbReference>
<proteinExistence type="evidence at protein level"/>
<name>CNRY_CUPMC</name>
<accession>P56621</accession>
<accession>Q5NUX0</accession>
<accession>Q9L3G1</accession>
<organism>
    <name type="scientific">Cupriavidus metallidurans (strain ATCC 43123 / DSM 2839 / NBRC 102507 / CH34)</name>
    <name type="common">Ralstonia metallidurans</name>
    <dbReference type="NCBI Taxonomy" id="266264"/>
    <lineage>
        <taxon>Bacteria</taxon>
        <taxon>Pseudomonadati</taxon>
        <taxon>Pseudomonadota</taxon>
        <taxon>Betaproteobacteria</taxon>
        <taxon>Burkholderiales</taxon>
        <taxon>Burkholderiaceae</taxon>
        <taxon>Cupriavidus</taxon>
    </lineage>
</organism>
<comment type="function">
    <text>Nickel and cobalt resistance proteins CnrA, CnrB, CnrC CnrH and CnrR may be involved in the regulation of CNR.</text>
</comment>
<comment type="function">
    <text evidence="2 3">CnrH alone is able to activate cnr expression, and both CnrY and CrnX are needed for nickel induction of CnrH (PubMed:10671463). In the absence of wild-type CnrY (due either to a frameshift, PubMed:10671463 or absence of the transcript, PubMed:10671464), nickel and cobalt resistance is constitutive, indicating that CrnY may act as a repressor (PubMed:10671463) or an anti-sigma factor (PubMed:10671464).</text>
</comment>
<comment type="subcellular location">
    <subcellularLocation>
        <location evidence="2">Cell inner membrane</location>
        <topology evidence="2">Single-pass membrane protein</topology>
    </subcellularLocation>
</comment>
<comment type="induction">
    <text evidence="2 3">By nickel and cobalt.</text>
</comment>
<comment type="similarity">
    <text evidence="4">To A.xylosoxydans NccY.</text>
</comment>
<keyword id="KW-0002">3D-structure</keyword>
<keyword id="KW-0997">Cell inner membrane</keyword>
<keyword id="KW-1003">Cell membrane</keyword>
<keyword id="KW-0170">Cobalt</keyword>
<keyword id="KW-0472">Membrane</keyword>
<keyword id="KW-0533">Nickel</keyword>
<keyword id="KW-0614">Plasmid</keyword>
<keyword id="KW-1185">Reference proteome</keyword>
<keyword id="KW-0812">Transmembrane</keyword>
<keyword id="KW-1133">Transmembrane helix</keyword>
<protein>
    <recommendedName>
        <fullName>Nickel and cobalt resistance protein CnrY</fullName>
    </recommendedName>
</protein>
<feature type="chain" id="PRO_0000089978" description="Nickel and cobalt resistance protein CnrY">
    <location>
        <begin position="1"/>
        <end position="95"/>
    </location>
</feature>
<feature type="topological domain" description="Cytoplasmic">
    <location>
        <begin position="1"/>
        <end position="45"/>
    </location>
</feature>
<feature type="transmembrane region" description="Helical" evidence="1">
    <location>
        <begin position="46"/>
        <end position="68"/>
    </location>
</feature>
<feature type="topological domain" description="Periplasmic">
    <location>
        <begin position="69"/>
        <end position="95"/>
    </location>
</feature>
<feature type="sequence conflict" description="In Ref. 1; M91650." evidence="4" ref="1">
    <original>R</original>
    <variation>RR</variation>
    <location>
        <position position="44"/>
    </location>
</feature>
<feature type="helix" evidence="5">
    <location>
        <begin position="4"/>
        <end position="18"/>
    </location>
</feature>
<feature type="helix" evidence="5">
    <location>
        <begin position="24"/>
        <end position="28"/>
    </location>
</feature>
<geneLocation type="plasmid">
    <name>pMOL28</name>
</geneLocation>
<sequence>MADVEEWLTHARKVTQEASIGVDVTSIQECISAEPAQRVLVARRDAWRAICCAAFAALVAFAAINRVATIMLEKPAPTWVATPSAASPFGLLIGK</sequence>
<reference key="1">
    <citation type="journal article" date="1993" name="J. Bacteriol.">
        <title>Characterization of the inducible nickel and cobalt resistance determinant cnr from pMOL28 of Alcaligenes eutrophus CH34.</title>
        <authorList>
            <person name="Liesegang H."/>
            <person name="Lemke K."/>
            <person name="Siddiqui R.A."/>
            <person name="Schlegel H.-G."/>
        </authorList>
    </citation>
    <scope>NUCLEOTIDE SEQUENCE [GENOMIC DNA]</scope>
</reference>
<reference key="2">
    <citation type="submission" date="2004-10" db="EMBL/GenBank/DDBJ databases">
        <title>Sequence and features of the Ralstonia metallidurans CH34 heavy metal plasmids pMOL28 and pMOL30.</title>
        <authorList>
            <person name="van der Lelie D."/>
            <person name="Monchy S."/>
            <person name="Taghavi S."/>
            <person name="McCorkle S."/>
            <person name="Dunn J."/>
            <person name="Benotmane M."/>
            <person name="Vallaeys T."/>
            <person name="Lapidus A."/>
            <person name="Mergeay M."/>
        </authorList>
    </citation>
    <scope>NUCLEOTIDE SEQUENCE [LARGE SCALE GENOMIC DNA]</scope>
</reference>
<reference key="3">
    <citation type="journal article" date="2010" name="PLoS ONE">
        <title>The complete genome sequence of Cupriavidus metallidurans strain CH34, a master survivalist in harsh and anthropogenic environments.</title>
        <authorList>
            <person name="Janssen P.J."/>
            <person name="Van Houdt R."/>
            <person name="Moors H."/>
            <person name="Monsieurs P."/>
            <person name="Morin N."/>
            <person name="Michaux A."/>
            <person name="Benotmane M.A."/>
            <person name="Leys N."/>
            <person name="Vallaeys T."/>
            <person name="Lapidus A."/>
            <person name="Monchy S."/>
            <person name="Medigue C."/>
            <person name="Taghavi S."/>
            <person name="McCorkle S."/>
            <person name="Dunn J."/>
            <person name="van der Lelie D."/>
            <person name="Mergeay M."/>
        </authorList>
    </citation>
    <scope>NUCLEOTIDE SEQUENCE [LARGE SCALE GENOMIC DNA]</scope>
    <source>
        <strain>ATCC 43123 / DSM 2839 / NBRC 102507 / CH34</strain>
    </source>
</reference>
<reference key="4">
    <citation type="journal article" date="2000" name="J. Bacteriol.">
        <title>Regulation of the cnr cobalt and nickel resistance determinant from Ralstonia sp. strain CH34.</title>
        <authorList>
            <person name="Grass G."/>
            <person name="Grosse C."/>
            <person name="Nies D.H."/>
        </authorList>
    </citation>
    <scope>CHARACTERIZATION</scope>
    <scope>INDUCTION</scope>
    <scope>SUBCELLULAR LOCATION</scope>
</reference>
<reference key="5">
    <citation type="journal article" date="2000" name="J. Bacteriol.">
        <title>Regulation of the cnr cobalt and nickel resistance determinant of Ralstonia eutropha (Alcaligenes eutrophus) CH34.</title>
        <authorList>
            <person name="Tibazarwa C."/>
            <person name="Wuertz S."/>
            <person name="Mergeay M."/>
            <person name="Wyns L."/>
            <person name="van der Lelie D."/>
        </authorList>
    </citation>
    <scope>CHARACTERIZATION</scope>
    <scope>INDUCTION</scope>
</reference>